<proteinExistence type="evidence at transcript level"/>
<organism>
    <name type="scientific">Adiantum capillus-veneris</name>
    <name type="common">Maidenhair fern</name>
    <dbReference type="NCBI Taxonomy" id="13818"/>
    <lineage>
        <taxon>Eukaryota</taxon>
        <taxon>Viridiplantae</taxon>
        <taxon>Streptophyta</taxon>
        <taxon>Embryophyta</taxon>
        <taxon>Tracheophyta</taxon>
        <taxon>Polypodiopsida</taxon>
        <taxon>Polypodiidae</taxon>
        <taxon>Polypodiales</taxon>
        <taxon>Pteridineae</taxon>
        <taxon>Pteridaceae</taxon>
        <taxon>Vittarioideae</taxon>
        <taxon>Adiantum</taxon>
    </lineage>
</organism>
<geneLocation type="chloroplast"/>
<feature type="chain" id="PRO_0000118008" description="NAD(P)H-quinone oxidoreductase chain 4, chloroplastic">
    <location>
        <begin position="1"/>
        <end position="497"/>
    </location>
</feature>
<feature type="transmembrane region" description="Helical" evidence="1">
    <location>
        <begin position="5"/>
        <end position="25"/>
    </location>
</feature>
<feature type="transmembrane region" description="Helical" evidence="1">
    <location>
        <begin position="36"/>
        <end position="56"/>
    </location>
</feature>
<feature type="transmembrane region" description="Helical" evidence="1">
    <location>
        <begin position="88"/>
        <end position="108"/>
    </location>
</feature>
<feature type="transmembrane region" description="Helical" evidence="1">
    <location>
        <begin position="112"/>
        <end position="132"/>
    </location>
</feature>
<feature type="transmembrane region" description="Helical" evidence="1">
    <location>
        <begin position="135"/>
        <end position="155"/>
    </location>
</feature>
<feature type="transmembrane region" description="Helical" evidence="1">
    <location>
        <begin position="168"/>
        <end position="188"/>
    </location>
</feature>
<feature type="transmembrane region" description="Helical" evidence="1">
    <location>
        <begin position="212"/>
        <end position="232"/>
    </location>
</feature>
<feature type="transmembrane region" description="Helical" evidence="1">
    <location>
        <begin position="243"/>
        <end position="263"/>
    </location>
</feature>
<feature type="transmembrane region" description="Helical" evidence="1">
    <location>
        <begin position="275"/>
        <end position="295"/>
    </location>
</feature>
<feature type="transmembrane region" description="Helical" evidence="1">
    <location>
        <begin position="306"/>
        <end position="326"/>
    </location>
</feature>
<feature type="transmembrane region" description="Helical" evidence="1">
    <location>
        <begin position="331"/>
        <end position="351"/>
    </location>
</feature>
<feature type="transmembrane region" description="Helical" evidence="1">
    <location>
        <begin position="387"/>
        <end position="407"/>
    </location>
</feature>
<feature type="transmembrane region" description="Helical" evidence="1">
    <location>
        <begin position="418"/>
        <end position="438"/>
    </location>
</feature>
<feature type="transmembrane region" description="Helical" evidence="1">
    <location>
        <begin position="463"/>
        <end position="483"/>
    </location>
</feature>
<protein>
    <recommendedName>
        <fullName evidence="1">NAD(P)H-quinone oxidoreductase chain 4, chloroplastic</fullName>
        <ecNumber evidence="1">7.1.1.-</ecNumber>
    </recommendedName>
    <alternativeName>
        <fullName evidence="1">NAD(P)H dehydrogenase, chain 4</fullName>
    </alternativeName>
    <alternativeName>
        <fullName evidence="1">NADH-plastoquinone oxidoreductase chain 4</fullName>
    </alternativeName>
</protein>
<reference key="1">
    <citation type="journal article" date="2003" name="DNA Res.">
        <title>Complete nucleotide sequence of the chloroplast genome from a leptosporangiate fern, Adiantum capillus-veneris L.</title>
        <authorList>
            <person name="Wolf P.G."/>
            <person name="Rowe C.A."/>
            <person name="Sinclair R.B."/>
            <person name="Hasebe M."/>
        </authorList>
    </citation>
    <scope>NUCLEOTIDE SEQUENCE [LARGE SCALE GENOMIC DNA]</scope>
</reference>
<reference key="2">
    <citation type="journal article" date="2004" name="Gene">
        <title>High levels of RNA editing in a vascular plant chloroplast genome: analysis of transcripts from the fern Adiantum capillus-veneris.</title>
        <authorList>
            <person name="Wolf P.G."/>
            <person name="Rowe C.A."/>
            <person name="Hasebe M."/>
        </authorList>
    </citation>
    <scope>NUCLEOTIDE SEQUENCE [GENOMIC DNA]</scope>
    <scope>RNA EDITING</scope>
    <source>
        <tissue>Frond</tissue>
    </source>
</reference>
<name>NU4C_ADICA</name>
<keyword id="KW-0150">Chloroplast</keyword>
<keyword id="KW-0472">Membrane</keyword>
<keyword id="KW-0520">NAD</keyword>
<keyword id="KW-0521">NADP</keyword>
<keyword id="KW-0934">Plastid</keyword>
<keyword id="KW-0618">Plastoquinone</keyword>
<keyword id="KW-0874">Quinone</keyword>
<keyword id="KW-0691">RNA editing</keyword>
<keyword id="KW-0793">Thylakoid</keyword>
<keyword id="KW-1278">Translocase</keyword>
<keyword id="KW-0812">Transmembrane</keyword>
<keyword id="KW-1133">Transmembrane helix</keyword>
<comment type="catalytic activity">
    <reaction evidence="1">
        <text>a plastoquinone + NADH + (n+1) H(+)(in) = a plastoquinol + NAD(+) + n H(+)(out)</text>
        <dbReference type="Rhea" id="RHEA:42608"/>
        <dbReference type="Rhea" id="RHEA-COMP:9561"/>
        <dbReference type="Rhea" id="RHEA-COMP:9562"/>
        <dbReference type="ChEBI" id="CHEBI:15378"/>
        <dbReference type="ChEBI" id="CHEBI:17757"/>
        <dbReference type="ChEBI" id="CHEBI:57540"/>
        <dbReference type="ChEBI" id="CHEBI:57945"/>
        <dbReference type="ChEBI" id="CHEBI:62192"/>
    </reaction>
</comment>
<comment type="catalytic activity">
    <reaction evidence="1">
        <text>a plastoquinone + NADPH + (n+1) H(+)(in) = a plastoquinol + NADP(+) + n H(+)(out)</text>
        <dbReference type="Rhea" id="RHEA:42612"/>
        <dbReference type="Rhea" id="RHEA-COMP:9561"/>
        <dbReference type="Rhea" id="RHEA-COMP:9562"/>
        <dbReference type="ChEBI" id="CHEBI:15378"/>
        <dbReference type="ChEBI" id="CHEBI:17757"/>
        <dbReference type="ChEBI" id="CHEBI:57783"/>
        <dbReference type="ChEBI" id="CHEBI:58349"/>
        <dbReference type="ChEBI" id="CHEBI:62192"/>
    </reaction>
</comment>
<comment type="subcellular location">
    <subcellularLocation>
        <location evidence="1">Plastid</location>
        <location evidence="1">Chloroplast thylakoid membrane</location>
        <topology evidence="1">Multi-pass membrane protein</topology>
    </subcellularLocation>
</comment>
<comment type="RNA editing">
    <location>
        <position position="7" evidence="2"/>
    </location>
    <location>
        <position position="47" evidence="2"/>
    </location>
    <location>
        <position position="458" evidence="2"/>
    </location>
</comment>
<comment type="similarity">
    <text evidence="1">Belongs to the complex I subunit 4 family.</text>
</comment>
<sequence length="497" mass="55663">MISNVPWLTVIVSLPIFAGLMIPILPRNGNRVTRWYTLGICILEFLLITYIFYCHFRIDYQSIQLLETFNWINNIHLHWSLGIDGLSLGLVILTGFATTLATLSAWPITRNTRLFYFLMLIMYGGQIGLFVSRDILLFFFMWEIELIPVYLLLCLWGGKRRLYSATKFVLYTAGGSIFLLVAALTMSFYGSEVPSFNIQDLIHKSYPLSLEVLIYVGFLVAYAVKLPIFPFHTWLPDTHGEAHYSTCMLLAGVLLKMGGYGLIRINLELLTHAHFLLGSWMMLFGAIQIIYASLISMSQRNFKRRIAYSSISHMGFVTIGIGSFTETGINGAILQMISHGLIGAALFFLAGTCYDRTRTYLLDQLGGAAISMPKLFTMFSTLSLASLALPGMSGFVSELLVFLGVVTSNQYSFAFKAGITVLEGIGTVLTPIYLLSMLRQLFYGYRFFDKSNPYSIDLGPRELFILICFLLPILGIGLYPNLILSIGSTEIPSLPLT</sequence>
<accession>Q85FH5</accession>
<gene>
    <name evidence="1" type="primary">ndhD</name>
</gene>
<dbReference type="EC" id="7.1.1.-" evidence="1"/>
<dbReference type="EMBL" id="AY178864">
    <property type="protein sequence ID" value="AAP29441.2"/>
    <property type="molecule type" value="Genomic_DNA"/>
</dbReference>
<dbReference type="RefSeq" id="NP_848110.3">
    <property type="nucleotide sequence ID" value="NC_004766.1"/>
</dbReference>
<dbReference type="SMR" id="Q85FH5"/>
<dbReference type="GeneID" id="807448"/>
<dbReference type="GO" id="GO:0009535">
    <property type="term" value="C:chloroplast thylakoid membrane"/>
    <property type="evidence" value="ECO:0007669"/>
    <property type="project" value="UniProtKB-SubCell"/>
</dbReference>
<dbReference type="GO" id="GO:0008137">
    <property type="term" value="F:NADH dehydrogenase (ubiquinone) activity"/>
    <property type="evidence" value="ECO:0007669"/>
    <property type="project" value="InterPro"/>
</dbReference>
<dbReference type="GO" id="GO:0048039">
    <property type="term" value="F:ubiquinone binding"/>
    <property type="evidence" value="ECO:0007669"/>
    <property type="project" value="TreeGrafter"/>
</dbReference>
<dbReference type="GO" id="GO:0042773">
    <property type="term" value="P:ATP synthesis coupled electron transport"/>
    <property type="evidence" value="ECO:0007669"/>
    <property type="project" value="InterPro"/>
</dbReference>
<dbReference type="GO" id="GO:0015990">
    <property type="term" value="P:electron transport coupled proton transport"/>
    <property type="evidence" value="ECO:0007669"/>
    <property type="project" value="TreeGrafter"/>
</dbReference>
<dbReference type="HAMAP" id="MF_00491">
    <property type="entry name" value="NDH1_NuoM"/>
    <property type="match status" value="1"/>
</dbReference>
<dbReference type="InterPro" id="IPR022997">
    <property type="entry name" value="NADH_Q_OxRdtase_chain4"/>
</dbReference>
<dbReference type="InterPro" id="IPR010227">
    <property type="entry name" value="NADH_Q_OxRdtase_chainM/4"/>
</dbReference>
<dbReference type="InterPro" id="IPR003918">
    <property type="entry name" value="NADH_UbQ_OxRdtase"/>
</dbReference>
<dbReference type="InterPro" id="IPR001750">
    <property type="entry name" value="ND/Mrp_TM"/>
</dbReference>
<dbReference type="NCBIfam" id="TIGR01972">
    <property type="entry name" value="NDH_I_M"/>
    <property type="match status" value="1"/>
</dbReference>
<dbReference type="NCBIfam" id="NF009212">
    <property type="entry name" value="PRK12561.1"/>
    <property type="match status" value="1"/>
</dbReference>
<dbReference type="PANTHER" id="PTHR43507:SF21">
    <property type="entry name" value="NAD(P)H-QUINONE OXIDOREDUCTASE CHAIN 4, CHLOROPLASTIC"/>
    <property type="match status" value="1"/>
</dbReference>
<dbReference type="PANTHER" id="PTHR43507">
    <property type="entry name" value="NADH-UBIQUINONE OXIDOREDUCTASE CHAIN 4"/>
    <property type="match status" value="1"/>
</dbReference>
<dbReference type="Pfam" id="PF00361">
    <property type="entry name" value="Proton_antipo_M"/>
    <property type="match status" value="1"/>
</dbReference>
<dbReference type="PRINTS" id="PR01437">
    <property type="entry name" value="NUOXDRDTASE4"/>
</dbReference>
<evidence type="ECO:0000255" key="1">
    <source>
        <dbReference type="HAMAP-Rule" id="MF_00491"/>
    </source>
</evidence>
<evidence type="ECO:0000269" key="2">
    <source>
    </source>
</evidence>